<reference key="1">
    <citation type="journal article" date="2005" name="Proc. Natl. Acad. Sci. U.S.A.">
        <title>The psychrophilic lifestyle as revealed by the genome sequence of Colwellia psychrerythraea 34H through genomic and proteomic analyses.</title>
        <authorList>
            <person name="Methe B.A."/>
            <person name="Nelson K.E."/>
            <person name="Deming J.W."/>
            <person name="Momen B."/>
            <person name="Melamud E."/>
            <person name="Zhang X."/>
            <person name="Moult J."/>
            <person name="Madupu R."/>
            <person name="Nelson W.C."/>
            <person name="Dodson R.J."/>
            <person name="Brinkac L.M."/>
            <person name="Daugherty S.C."/>
            <person name="Durkin A.S."/>
            <person name="DeBoy R.T."/>
            <person name="Kolonay J.F."/>
            <person name="Sullivan S.A."/>
            <person name="Zhou L."/>
            <person name="Davidsen T.M."/>
            <person name="Wu M."/>
            <person name="Huston A.L."/>
            <person name="Lewis M."/>
            <person name="Weaver B."/>
            <person name="Weidman J.F."/>
            <person name="Khouri H."/>
            <person name="Utterback T.R."/>
            <person name="Feldblyum T.V."/>
            <person name="Fraser C.M."/>
        </authorList>
    </citation>
    <scope>NUCLEOTIDE SEQUENCE [LARGE SCALE GENOMIC DNA]</scope>
    <source>
        <strain>34H / ATCC BAA-681</strain>
    </source>
</reference>
<evidence type="ECO:0000255" key="1">
    <source>
        <dbReference type="HAMAP-Rule" id="MF_01551"/>
    </source>
</evidence>
<feature type="chain" id="PRO_0000070400" description="Ribosomal RNA large subunit methyltransferase M">
    <location>
        <begin position="1"/>
        <end position="368"/>
    </location>
</feature>
<feature type="active site" description="Proton acceptor" evidence="1">
    <location>
        <position position="310"/>
    </location>
</feature>
<feature type="binding site" evidence="1">
    <location>
        <position position="192"/>
    </location>
    <ligand>
        <name>S-adenosyl-L-methionine</name>
        <dbReference type="ChEBI" id="CHEBI:59789"/>
    </ligand>
</feature>
<feature type="binding site" evidence="1">
    <location>
        <begin position="225"/>
        <end position="228"/>
    </location>
    <ligand>
        <name>S-adenosyl-L-methionine</name>
        <dbReference type="ChEBI" id="CHEBI:59789"/>
    </ligand>
</feature>
<feature type="binding site" evidence="1">
    <location>
        <position position="244"/>
    </location>
    <ligand>
        <name>S-adenosyl-L-methionine</name>
        <dbReference type="ChEBI" id="CHEBI:59789"/>
    </ligand>
</feature>
<feature type="binding site" evidence="1">
    <location>
        <position position="264"/>
    </location>
    <ligand>
        <name>S-adenosyl-L-methionine</name>
        <dbReference type="ChEBI" id="CHEBI:59789"/>
    </ligand>
</feature>
<feature type="binding site" evidence="1">
    <location>
        <position position="281"/>
    </location>
    <ligand>
        <name>S-adenosyl-L-methionine</name>
        <dbReference type="ChEBI" id="CHEBI:59789"/>
    </ligand>
</feature>
<keyword id="KW-0963">Cytoplasm</keyword>
<keyword id="KW-0489">Methyltransferase</keyword>
<keyword id="KW-0698">rRNA processing</keyword>
<keyword id="KW-0949">S-adenosyl-L-methionine</keyword>
<keyword id="KW-0808">Transferase</keyword>
<comment type="function">
    <text evidence="1">Catalyzes the 2'-O-methylation at nucleotide C2498 in 23S rRNA.</text>
</comment>
<comment type="catalytic activity">
    <reaction evidence="1">
        <text>cytidine(2498) in 23S rRNA + S-adenosyl-L-methionine = 2'-O-methylcytidine(2498) in 23S rRNA + S-adenosyl-L-homocysteine + H(+)</text>
        <dbReference type="Rhea" id="RHEA:42788"/>
        <dbReference type="Rhea" id="RHEA-COMP:10244"/>
        <dbReference type="Rhea" id="RHEA-COMP:10245"/>
        <dbReference type="ChEBI" id="CHEBI:15378"/>
        <dbReference type="ChEBI" id="CHEBI:57856"/>
        <dbReference type="ChEBI" id="CHEBI:59789"/>
        <dbReference type="ChEBI" id="CHEBI:74495"/>
        <dbReference type="ChEBI" id="CHEBI:82748"/>
        <dbReference type="EC" id="2.1.1.186"/>
    </reaction>
</comment>
<comment type="subunit">
    <text evidence="1">Monomer.</text>
</comment>
<comment type="subcellular location">
    <subcellularLocation>
        <location evidence="1">Cytoplasm</location>
    </subcellularLocation>
</comment>
<comment type="similarity">
    <text evidence="1">Belongs to the class I-like SAM-binding methyltransferase superfamily. RNA methyltransferase RlmE family. RlmM subfamily.</text>
</comment>
<dbReference type="EC" id="2.1.1.186" evidence="1"/>
<dbReference type="EMBL" id="CP000083">
    <property type="protein sequence ID" value="AAZ26479.1"/>
    <property type="molecule type" value="Genomic_DNA"/>
</dbReference>
<dbReference type="RefSeq" id="WP_011044301.1">
    <property type="nucleotide sequence ID" value="NC_003910.7"/>
</dbReference>
<dbReference type="SMR" id="Q47YA5"/>
<dbReference type="STRING" id="167879.CPS_3541"/>
<dbReference type="KEGG" id="cps:CPS_3541"/>
<dbReference type="eggNOG" id="COG2933">
    <property type="taxonomic scope" value="Bacteria"/>
</dbReference>
<dbReference type="HOGENOM" id="CLU_043780_0_0_6"/>
<dbReference type="Proteomes" id="UP000000547">
    <property type="component" value="Chromosome"/>
</dbReference>
<dbReference type="GO" id="GO:0005737">
    <property type="term" value="C:cytoplasm"/>
    <property type="evidence" value="ECO:0007669"/>
    <property type="project" value="UniProtKB-SubCell"/>
</dbReference>
<dbReference type="GO" id="GO:0008757">
    <property type="term" value="F:S-adenosylmethionine-dependent methyltransferase activity"/>
    <property type="evidence" value="ECO:0007669"/>
    <property type="project" value="UniProtKB-UniRule"/>
</dbReference>
<dbReference type="GO" id="GO:0032259">
    <property type="term" value="P:methylation"/>
    <property type="evidence" value="ECO:0007669"/>
    <property type="project" value="UniProtKB-KW"/>
</dbReference>
<dbReference type="GO" id="GO:0006364">
    <property type="term" value="P:rRNA processing"/>
    <property type="evidence" value="ECO:0007669"/>
    <property type="project" value="UniProtKB-UniRule"/>
</dbReference>
<dbReference type="Gene3D" id="3.30.2300.20">
    <property type="match status" value="1"/>
</dbReference>
<dbReference type="Gene3D" id="3.30.70.2810">
    <property type="match status" value="1"/>
</dbReference>
<dbReference type="Gene3D" id="3.40.50.150">
    <property type="entry name" value="Vaccinia Virus protein VP39"/>
    <property type="match status" value="1"/>
</dbReference>
<dbReference type="HAMAP" id="MF_01551">
    <property type="entry name" value="23SrRNA_methyltr_M"/>
    <property type="match status" value="1"/>
</dbReference>
<dbReference type="InterPro" id="IPR040739">
    <property type="entry name" value="RlmM_FDX"/>
</dbReference>
<dbReference type="InterPro" id="IPR048646">
    <property type="entry name" value="RlmM_THUMP-like"/>
</dbReference>
<dbReference type="InterPro" id="IPR002877">
    <property type="entry name" value="RNA_MeTrfase_FtsJ_dom"/>
</dbReference>
<dbReference type="InterPro" id="IPR011224">
    <property type="entry name" value="rRNA_MeTrfase_M"/>
</dbReference>
<dbReference type="InterPro" id="IPR029063">
    <property type="entry name" value="SAM-dependent_MTases_sf"/>
</dbReference>
<dbReference type="NCBIfam" id="NF008734">
    <property type="entry name" value="PRK11760.1"/>
    <property type="match status" value="1"/>
</dbReference>
<dbReference type="PANTHER" id="PTHR37524">
    <property type="entry name" value="RIBOSOMAL RNA LARGE SUBUNIT METHYLTRANSFERASE M"/>
    <property type="match status" value="1"/>
</dbReference>
<dbReference type="PANTHER" id="PTHR37524:SF2">
    <property type="entry name" value="RIBOSOMAL RNA METHYLTRANSFERASE FTSJ DOMAIN-CONTAINING PROTEIN"/>
    <property type="match status" value="1"/>
</dbReference>
<dbReference type="Pfam" id="PF01728">
    <property type="entry name" value="FtsJ"/>
    <property type="match status" value="1"/>
</dbReference>
<dbReference type="Pfam" id="PF18125">
    <property type="entry name" value="RlmM_FDX"/>
    <property type="match status" value="1"/>
</dbReference>
<dbReference type="Pfam" id="PF21239">
    <property type="entry name" value="RLMM_N"/>
    <property type="match status" value="1"/>
</dbReference>
<dbReference type="PIRSF" id="PIRSF028774">
    <property type="entry name" value="UCP028774"/>
    <property type="match status" value="1"/>
</dbReference>
<dbReference type="SUPFAM" id="SSF53335">
    <property type="entry name" value="S-adenosyl-L-methionine-dependent methyltransferases"/>
    <property type="match status" value="1"/>
</dbReference>
<proteinExistence type="inferred from homology"/>
<organism>
    <name type="scientific">Colwellia psychrerythraea (strain 34H / ATCC BAA-681)</name>
    <name type="common">Vibrio psychroerythus</name>
    <dbReference type="NCBI Taxonomy" id="167879"/>
    <lineage>
        <taxon>Bacteria</taxon>
        <taxon>Pseudomonadati</taxon>
        <taxon>Pseudomonadota</taxon>
        <taxon>Gammaproteobacteria</taxon>
        <taxon>Alteromonadales</taxon>
        <taxon>Colwelliaceae</taxon>
        <taxon>Colwellia</taxon>
    </lineage>
</organism>
<name>RLMM_COLP3</name>
<sequence length="368" mass="42158">MTSIVLFCRPGFEKECGAEIQEKAAWNEMYGYLELKINQGLVFFHLHESAHGEALMNKLPLKRLIFARQWFVTVTDKIDLPDYNRVEAITEALGNDWQYSDLRMEMADDNDGKSLSKFCRKLSVPLRQALRKNKVLTQKGNNSADDPEGAILHALFLSGQEVILGFSLARNSSPHVMGIPRLKFPSASPSRSTLKLDEAFLHFIPRDEWDERLTSGMNAVDLGSAPGGWTYQLVRRGMMVTAIDNGLMAESLMETGQVKHKMMDGFKYVPLKQNVYWLVCDMIEKPQRVAKLMSEWLLHGHCKEAMFNLKLPMKGRYQQVTNDLQTIKDAFTKHNVKYELYAKHLYYDREEVTVHARLLSPAPLRAKE</sequence>
<accession>Q47YA5</accession>
<protein>
    <recommendedName>
        <fullName evidence="1">Ribosomal RNA large subunit methyltransferase M</fullName>
        <ecNumber evidence="1">2.1.1.186</ecNumber>
    </recommendedName>
    <alternativeName>
        <fullName evidence="1">23S rRNA (cytidine2498-2'-O)-methyltransferase</fullName>
    </alternativeName>
    <alternativeName>
        <fullName evidence="1">23S rRNA 2'-O-ribose methyltransferase RlmM</fullName>
    </alternativeName>
</protein>
<gene>
    <name evidence="1" type="primary">rlmM</name>
    <name type="ordered locus">CPS_3541</name>
</gene>